<protein>
    <recommendedName>
        <fullName evidence="1">RNA pyrophosphohydrolase</fullName>
        <ecNumber evidence="1">3.6.1.-</ecNumber>
    </recommendedName>
    <alternativeName>
        <fullName evidence="1">(Di)nucleoside polyphosphate hydrolase</fullName>
    </alternativeName>
</protein>
<reference key="1">
    <citation type="journal article" date="2007" name="Genes Dev.">
        <title>New insights into Acinetobacter baumannii pathogenesis revealed by high-density pyrosequencing and transposon mutagenesis.</title>
        <authorList>
            <person name="Smith M.G."/>
            <person name="Gianoulis T.A."/>
            <person name="Pukatzki S."/>
            <person name="Mekalanos J.J."/>
            <person name="Ornston L.N."/>
            <person name="Gerstein M."/>
            <person name="Snyder M."/>
        </authorList>
    </citation>
    <scope>NUCLEOTIDE SEQUENCE [LARGE SCALE GENOMIC DNA]</scope>
    <source>
        <strain>ATCC 17978 / DSM 105126 / CIP 53.77 / LMG 1025 / NCDC KC755 / 5377</strain>
    </source>
</reference>
<gene>
    <name evidence="1" type="primary">rppH</name>
    <name evidence="1" type="synonym">nudH</name>
    <name type="ordered locus">A1S_0414</name>
</gene>
<organism>
    <name type="scientific">Acinetobacter baumannii (strain ATCC 17978 / DSM 105126 / CIP 53.77 / LMG 1025 / NCDC KC755 / 5377)</name>
    <dbReference type="NCBI Taxonomy" id="400667"/>
    <lineage>
        <taxon>Bacteria</taxon>
        <taxon>Pseudomonadati</taxon>
        <taxon>Pseudomonadota</taxon>
        <taxon>Gammaproteobacteria</taxon>
        <taxon>Moraxellales</taxon>
        <taxon>Moraxellaceae</taxon>
        <taxon>Acinetobacter</taxon>
        <taxon>Acinetobacter calcoaceticus/baumannii complex</taxon>
    </lineage>
</organism>
<sequence length="161" mass="18799">MIDSEGFRPNVGIILANDDGQVLWAKRIGHNAWQFPQGGIQFGETPEQALFRELREEIGLLPEHVQIIAQTKGWLRYRLPHRYIRSDSDPVCIGQKQKWFLLKLTAPAKNIQLNLADPPEFDEWQWVSYWYPLGQVVNFKRDVYRKAMVELCTQLPVQQLP</sequence>
<feature type="chain" id="PRO_1000115260" description="RNA pyrophosphohydrolase">
    <location>
        <begin position="1"/>
        <end position="161"/>
    </location>
</feature>
<feature type="domain" description="Nudix hydrolase" evidence="1">
    <location>
        <begin position="6"/>
        <end position="149"/>
    </location>
</feature>
<feature type="short sequence motif" description="Nudix box">
    <location>
        <begin position="38"/>
        <end position="59"/>
    </location>
</feature>
<proteinExistence type="inferred from homology"/>
<dbReference type="EC" id="3.6.1.-" evidence="1"/>
<dbReference type="EMBL" id="CP000521">
    <property type="protein sequence ID" value="ABO10869.2"/>
    <property type="molecule type" value="Genomic_DNA"/>
</dbReference>
<dbReference type="RefSeq" id="WP_000567254.1">
    <property type="nucleotide sequence ID" value="NZ_CP053098.1"/>
</dbReference>
<dbReference type="SMR" id="A3M1S5"/>
<dbReference type="KEGG" id="acb:A1S_0414"/>
<dbReference type="HOGENOM" id="CLU_087195_3_1_6"/>
<dbReference type="GO" id="GO:0016462">
    <property type="term" value="F:pyrophosphatase activity"/>
    <property type="evidence" value="ECO:0007669"/>
    <property type="project" value="UniProtKB-ARBA"/>
</dbReference>
<dbReference type="CDD" id="cd03671">
    <property type="entry name" value="NUDIX_Ap4A_hydrolase_plant_like"/>
    <property type="match status" value="1"/>
</dbReference>
<dbReference type="FunFam" id="3.90.79.10:FF:000001">
    <property type="entry name" value="RNA pyrophosphohydrolase"/>
    <property type="match status" value="1"/>
</dbReference>
<dbReference type="Gene3D" id="3.90.79.10">
    <property type="entry name" value="Nucleoside Triphosphate Pyrophosphohydrolase"/>
    <property type="match status" value="1"/>
</dbReference>
<dbReference type="HAMAP" id="MF_00298">
    <property type="entry name" value="Nudix_RppH"/>
    <property type="match status" value="1"/>
</dbReference>
<dbReference type="InterPro" id="IPR020476">
    <property type="entry name" value="Nudix_hydrolase"/>
</dbReference>
<dbReference type="InterPro" id="IPR015797">
    <property type="entry name" value="NUDIX_hydrolase-like_dom_sf"/>
</dbReference>
<dbReference type="InterPro" id="IPR020084">
    <property type="entry name" value="NUDIX_hydrolase_CS"/>
</dbReference>
<dbReference type="InterPro" id="IPR000086">
    <property type="entry name" value="NUDIX_hydrolase_dom"/>
</dbReference>
<dbReference type="InterPro" id="IPR022927">
    <property type="entry name" value="RppH"/>
</dbReference>
<dbReference type="NCBIfam" id="NF001934">
    <property type="entry name" value="PRK00714.1-1"/>
    <property type="match status" value="1"/>
</dbReference>
<dbReference type="NCBIfam" id="NF001937">
    <property type="entry name" value="PRK00714.1-4"/>
    <property type="match status" value="1"/>
</dbReference>
<dbReference type="NCBIfam" id="NF001938">
    <property type="entry name" value="PRK00714.1-5"/>
    <property type="match status" value="1"/>
</dbReference>
<dbReference type="PANTHER" id="PTHR43736">
    <property type="entry name" value="ADP-RIBOSE PYROPHOSPHATASE"/>
    <property type="match status" value="1"/>
</dbReference>
<dbReference type="PANTHER" id="PTHR43736:SF1">
    <property type="entry name" value="DIHYDRONEOPTERIN TRIPHOSPHATE DIPHOSPHATASE"/>
    <property type="match status" value="1"/>
</dbReference>
<dbReference type="Pfam" id="PF00293">
    <property type="entry name" value="NUDIX"/>
    <property type="match status" value="1"/>
</dbReference>
<dbReference type="PRINTS" id="PR00502">
    <property type="entry name" value="NUDIXFAMILY"/>
</dbReference>
<dbReference type="SUPFAM" id="SSF55811">
    <property type="entry name" value="Nudix"/>
    <property type="match status" value="1"/>
</dbReference>
<dbReference type="PROSITE" id="PS51462">
    <property type="entry name" value="NUDIX"/>
    <property type="match status" value="1"/>
</dbReference>
<dbReference type="PROSITE" id="PS00893">
    <property type="entry name" value="NUDIX_BOX"/>
    <property type="match status" value="1"/>
</dbReference>
<accession>A3M1S5</accession>
<comment type="function">
    <text evidence="1">Accelerates the degradation of transcripts by removing pyrophosphate from the 5'-end of triphosphorylated RNA, leading to a more labile monophosphorylated state that can stimulate subsequent ribonuclease cleavage.</text>
</comment>
<comment type="cofactor">
    <cofactor evidence="1">
        <name>a divalent metal cation</name>
        <dbReference type="ChEBI" id="CHEBI:60240"/>
    </cofactor>
</comment>
<comment type="similarity">
    <text evidence="1">Belongs to the Nudix hydrolase family. RppH subfamily.</text>
</comment>
<evidence type="ECO:0000255" key="1">
    <source>
        <dbReference type="HAMAP-Rule" id="MF_00298"/>
    </source>
</evidence>
<name>RPPH_ACIBT</name>
<keyword id="KW-0378">Hydrolase</keyword>